<gene>
    <name evidence="1" type="primary">rpsD</name>
    <name type="ordered locus">EcolC_0417</name>
</gene>
<protein>
    <recommendedName>
        <fullName evidence="1">Small ribosomal subunit protein uS4</fullName>
    </recommendedName>
    <alternativeName>
        <fullName evidence="2">30S ribosomal protein S4</fullName>
    </alternativeName>
</protein>
<name>RS4_ECOLC</name>
<sequence length="206" mass="23469">MARYLGPKLKLSRREGTDLFLKSGVRAIDTKCKIEQAPGQHGARKPRLSDYGVQLREKQKVRRIYGVLERQFRNYYKEAARLKGNTGENLLALLEGRLDNVVYRMGFGATRAEARQLVSHKAIMVNGRVVNIASYQVSPNDVVSIREKAKKQSRVKAALELAEQREKPTWLEVDAGKMEGTFKRKPERSDLSADINEHLIVELYSK</sequence>
<reference key="1">
    <citation type="submission" date="2008-02" db="EMBL/GenBank/DDBJ databases">
        <title>Complete sequence of Escherichia coli C str. ATCC 8739.</title>
        <authorList>
            <person name="Copeland A."/>
            <person name="Lucas S."/>
            <person name="Lapidus A."/>
            <person name="Glavina del Rio T."/>
            <person name="Dalin E."/>
            <person name="Tice H."/>
            <person name="Bruce D."/>
            <person name="Goodwin L."/>
            <person name="Pitluck S."/>
            <person name="Kiss H."/>
            <person name="Brettin T."/>
            <person name="Detter J.C."/>
            <person name="Han C."/>
            <person name="Kuske C.R."/>
            <person name="Schmutz J."/>
            <person name="Larimer F."/>
            <person name="Land M."/>
            <person name="Hauser L."/>
            <person name="Kyrpides N."/>
            <person name="Mikhailova N."/>
            <person name="Ingram L."/>
            <person name="Richardson P."/>
        </authorList>
    </citation>
    <scope>NUCLEOTIDE SEQUENCE [LARGE SCALE GENOMIC DNA]</scope>
    <source>
        <strain>ATCC 8739 / DSM 1576 / NBRC 3972 / NCIMB 8545 / WDCM 00012 / Crooks</strain>
    </source>
</reference>
<comment type="function">
    <text evidence="1">One of the primary rRNA binding proteins, it binds directly to 16S rRNA where it nucleates assembly of the body of the 30S subunit.</text>
</comment>
<comment type="function">
    <text evidence="1">With S5 and S12 plays an important role in translational accuracy.</text>
</comment>
<comment type="subunit">
    <text evidence="1">Part of the 30S ribosomal subunit. Contacts protein S5. The interaction surface between S4 and S5 is involved in control of translational fidelity.</text>
</comment>
<comment type="similarity">
    <text evidence="1">Belongs to the universal ribosomal protein uS4 family.</text>
</comment>
<evidence type="ECO:0000255" key="1">
    <source>
        <dbReference type="HAMAP-Rule" id="MF_01306"/>
    </source>
</evidence>
<evidence type="ECO:0000305" key="2"/>
<organism>
    <name type="scientific">Escherichia coli (strain ATCC 8739 / DSM 1576 / NBRC 3972 / NCIMB 8545 / WDCM 00012 / Crooks)</name>
    <dbReference type="NCBI Taxonomy" id="481805"/>
    <lineage>
        <taxon>Bacteria</taxon>
        <taxon>Pseudomonadati</taxon>
        <taxon>Pseudomonadota</taxon>
        <taxon>Gammaproteobacteria</taxon>
        <taxon>Enterobacterales</taxon>
        <taxon>Enterobacteriaceae</taxon>
        <taxon>Escherichia</taxon>
    </lineage>
</organism>
<keyword id="KW-0687">Ribonucleoprotein</keyword>
<keyword id="KW-0689">Ribosomal protein</keyword>
<keyword id="KW-0694">RNA-binding</keyword>
<keyword id="KW-0699">rRNA-binding</keyword>
<proteinExistence type="inferred from homology"/>
<dbReference type="EMBL" id="CP000946">
    <property type="protein sequence ID" value="ACA76095.1"/>
    <property type="molecule type" value="Genomic_DNA"/>
</dbReference>
<dbReference type="RefSeq" id="WP_000135224.1">
    <property type="nucleotide sequence ID" value="NZ_MTFT01000014.1"/>
</dbReference>
<dbReference type="SMR" id="B1IQ03"/>
<dbReference type="GeneID" id="93778691"/>
<dbReference type="KEGG" id="ecl:EcolC_0417"/>
<dbReference type="HOGENOM" id="CLU_092403_0_2_6"/>
<dbReference type="GO" id="GO:0015935">
    <property type="term" value="C:small ribosomal subunit"/>
    <property type="evidence" value="ECO:0007669"/>
    <property type="project" value="InterPro"/>
</dbReference>
<dbReference type="GO" id="GO:0019843">
    <property type="term" value="F:rRNA binding"/>
    <property type="evidence" value="ECO:0007669"/>
    <property type="project" value="UniProtKB-UniRule"/>
</dbReference>
<dbReference type="GO" id="GO:0003735">
    <property type="term" value="F:structural constituent of ribosome"/>
    <property type="evidence" value="ECO:0007669"/>
    <property type="project" value="InterPro"/>
</dbReference>
<dbReference type="GO" id="GO:0042274">
    <property type="term" value="P:ribosomal small subunit biogenesis"/>
    <property type="evidence" value="ECO:0007669"/>
    <property type="project" value="TreeGrafter"/>
</dbReference>
<dbReference type="GO" id="GO:0006412">
    <property type="term" value="P:translation"/>
    <property type="evidence" value="ECO:0007669"/>
    <property type="project" value="UniProtKB-UniRule"/>
</dbReference>
<dbReference type="CDD" id="cd00165">
    <property type="entry name" value="S4"/>
    <property type="match status" value="1"/>
</dbReference>
<dbReference type="FunFam" id="1.10.1050.10:FF:000001">
    <property type="entry name" value="30S ribosomal protein S4"/>
    <property type="match status" value="1"/>
</dbReference>
<dbReference type="FunFam" id="3.10.290.10:FF:000001">
    <property type="entry name" value="30S ribosomal protein S4"/>
    <property type="match status" value="1"/>
</dbReference>
<dbReference type="Gene3D" id="1.10.1050.10">
    <property type="entry name" value="Ribosomal Protein S4 Delta 41, Chain A, domain 1"/>
    <property type="match status" value="1"/>
</dbReference>
<dbReference type="Gene3D" id="3.10.290.10">
    <property type="entry name" value="RNA-binding S4 domain"/>
    <property type="match status" value="1"/>
</dbReference>
<dbReference type="HAMAP" id="MF_01306_B">
    <property type="entry name" value="Ribosomal_uS4_B"/>
    <property type="match status" value="1"/>
</dbReference>
<dbReference type="InterPro" id="IPR022801">
    <property type="entry name" value="Ribosomal_uS4"/>
</dbReference>
<dbReference type="InterPro" id="IPR005709">
    <property type="entry name" value="Ribosomal_uS4_bac-type"/>
</dbReference>
<dbReference type="InterPro" id="IPR018079">
    <property type="entry name" value="Ribosomal_uS4_CS"/>
</dbReference>
<dbReference type="InterPro" id="IPR001912">
    <property type="entry name" value="Ribosomal_uS4_N"/>
</dbReference>
<dbReference type="InterPro" id="IPR002942">
    <property type="entry name" value="S4_RNA-bd"/>
</dbReference>
<dbReference type="InterPro" id="IPR036986">
    <property type="entry name" value="S4_RNA-bd_sf"/>
</dbReference>
<dbReference type="NCBIfam" id="NF003717">
    <property type="entry name" value="PRK05327.1"/>
    <property type="match status" value="1"/>
</dbReference>
<dbReference type="NCBIfam" id="TIGR01017">
    <property type="entry name" value="rpsD_bact"/>
    <property type="match status" value="1"/>
</dbReference>
<dbReference type="PANTHER" id="PTHR11831">
    <property type="entry name" value="30S 40S RIBOSOMAL PROTEIN"/>
    <property type="match status" value="1"/>
</dbReference>
<dbReference type="PANTHER" id="PTHR11831:SF4">
    <property type="entry name" value="SMALL RIBOSOMAL SUBUNIT PROTEIN US4M"/>
    <property type="match status" value="1"/>
</dbReference>
<dbReference type="Pfam" id="PF00163">
    <property type="entry name" value="Ribosomal_S4"/>
    <property type="match status" value="1"/>
</dbReference>
<dbReference type="Pfam" id="PF01479">
    <property type="entry name" value="S4"/>
    <property type="match status" value="1"/>
</dbReference>
<dbReference type="SMART" id="SM01390">
    <property type="entry name" value="Ribosomal_S4"/>
    <property type="match status" value="1"/>
</dbReference>
<dbReference type="SMART" id="SM00363">
    <property type="entry name" value="S4"/>
    <property type="match status" value="1"/>
</dbReference>
<dbReference type="SUPFAM" id="SSF55174">
    <property type="entry name" value="Alpha-L RNA-binding motif"/>
    <property type="match status" value="1"/>
</dbReference>
<dbReference type="PROSITE" id="PS00632">
    <property type="entry name" value="RIBOSOMAL_S4"/>
    <property type="match status" value="1"/>
</dbReference>
<dbReference type="PROSITE" id="PS50889">
    <property type="entry name" value="S4"/>
    <property type="match status" value="1"/>
</dbReference>
<accession>B1IQ03</accession>
<feature type="chain" id="PRO_1000085972" description="Small ribosomal subunit protein uS4">
    <location>
        <begin position="1"/>
        <end position="206"/>
    </location>
</feature>
<feature type="domain" description="S4 RNA-binding" evidence="1">
    <location>
        <begin position="96"/>
        <end position="156"/>
    </location>
</feature>